<name>SYH_LEIXX</name>
<gene>
    <name type="primary">hisS</name>
    <name type="ordered locus">Lxx17220</name>
</gene>
<reference key="1">
    <citation type="journal article" date="2004" name="Mol. Plant Microbe Interact.">
        <title>The genome sequence of the Gram-positive sugarcane pathogen Leifsonia xyli subsp. xyli.</title>
        <authorList>
            <person name="Monteiro-Vitorello C.B."/>
            <person name="Camargo L.E.A."/>
            <person name="Van Sluys M.A."/>
            <person name="Kitajima J.P."/>
            <person name="Truffi D."/>
            <person name="do Amaral A.M."/>
            <person name="Harakava R."/>
            <person name="de Oliveira J.C.F."/>
            <person name="Wood D."/>
            <person name="de Oliveira M.C."/>
            <person name="Miyaki C.Y."/>
            <person name="Takita M.A."/>
            <person name="da Silva A.C.R."/>
            <person name="Furlan L.R."/>
            <person name="Carraro D.M."/>
            <person name="Camarotte G."/>
            <person name="Almeida N.F. Jr."/>
            <person name="Carrer H."/>
            <person name="Coutinho L.L."/>
            <person name="El-Dorry H.A."/>
            <person name="Ferro M.I.T."/>
            <person name="Gagliardi P.R."/>
            <person name="Giglioti E."/>
            <person name="Goldman M.H.S."/>
            <person name="Goldman G.H."/>
            <person name="Kimura E.T."/>
            <person name="Ferro E.S."/>
            <person name="Kuramae E.E."/>
            <person name="Lemos E.G.M."/>
            <person name="Lemos M.V.F."/>
            <person name="Mauro S.M.Z."/>
            <person name="Machado M.A."/>
            <person name="Marino C.L."/>
            <person name="Menck C.F."/>
            <person name="Nunes L.R."/>
            <person name="Oliveira R.C."/>
            <person name="Pereira G.G."/>
            <person name="Siqueira W."/>
            <person name="de Souza A.A."/>
            <person name="Tsai S.M."/>
            <person name="Zanca A.S."/>
            <person name="Simpson A.J.G."/>
            <person name="Brumbley S.M."/>
            <person name="Setubal J.C."/>
        </authorList>
    </citation>
    <scope>NUCLEOTIDE SEQUENCE [LARGE SCALE GENOMIC DNA]</scope>
    <source>
        <strain>CTCB07</strain>
    </source>
</reference>
<accession>Q6ADR4</accession>
<protein>
    <recommendedName>
        <fullName>Histidine--tRNA ligase</fullName>
        <ecNumber>6.1.1.21</ecNumber>
    </recommendedName>
    <alternativeName>
        <fullName>Histidyl-tRNA synthetase</fullName>
        <shortName>HisRS</shortName>
    </alternativeName>
</protein>
<organism>
    <name type="scientific">Leifsonia xyli subsp. xyli (strain CTCB07)</name>
    <dbReference type="NCBI Taxonomy" id="281090"/>
    <lineage>
        <taxon>Bacteria</taxon>
        <taxon>Bacillati</taxon>
        <taxon>Actinomycetota</taxon>
        <taxon>Actinomycetes</taxon>
        <taxon>Micrococcales</taxon>
        <taxon>Microbacteriaceae</taxon>
        <taxon>Leifsonia</taxon>
    </lineage>
</organism>
<evidence type="ECO:0000250" key="1"/>
<evidence type="ECO:0000305" key="2"/>
<proteinExistence type="inferred from homology"/>
<comment type="catalytic activity">
    <reaction>
        <text>tRNA(His) + L-histidine + ATP = L-histidyl-tRNA(His) + AMP + diphosphate + H(+)</text>
        <dbReference type="Rhea" id="RHEA:17313"/>
        <dbReference type="Rhea" id="RHEA-COMP:9665"/>
        <dbReference type="Rhea" id="RHEA-COMP:9689"/>
        <dbReference type="ChEBI" id="CHEBI:15378"/>
        <dbReference type="ChEBI" id="CHEBI:30616"/>
        <dbReference type="ChEBI" id="CHEBI:33019"/>
        <dbReference type="ChEBI" id="CHEBI:57595"/>
        <dbReference type="ChEBI" id="CHEBI:78442"/>
        <dbReference type="ChEBI" id="CHEBI:78527"/>
        <dbReference type="ChEBI" id="CHEBI:456215"/>
        <dbReference type="EC" id="6.1.1.21"/>
    </reaction>
</comment>
<comment type="subunit">
    <text evidence="1">Homodimer.</text>
</comment>
<comment type="subcellular location">
    <subcellularLocation>
        <location evidence="1">Cytoplasm</location>
    </subcellularLocation>
</comment>
<comment type="similarity">
    <text evidence="2">Belongs to the class-II aminoacyl-tRNA synthetase family.</text>
</comment>
<feature type="chain" id="PRO_0000136184" description="Histidine--tRNA ligase">
    <location>
        <begin position="1"/>
        <end position="431"/>
    </location>
</feature>
<dbReference type="EC" id="6.1.1.21"/>
<dbReference type="EMBL" id="AE016822">
    <property type="protein sequence ID" value="AAT89482.1"/>
    <property type="molecule type" value="Genomic_DNA"/>
</dbReference>
<dbReference type="RefSeq" id="WP_011186470.1">
    <property type="nucleotide sequence ID" value="NC_006087.1"/>
</dbReference>
<dbReference type="SMR" id="Q6ADR4"/>
<dbReference type="STRING" id="281090.Lxx17220"/>
<dbReference type="KEGG" id="lxx:Lxx17220"/>
<dbReference type="eggNOG" id="COG0124">
    <property type="taxonomic scope" value="Bacteria"/>
</dbReference>
<dbReference type="HOGENOM" id="CLU_025113_3_0_11"/>
<dbReference type="Proteomes" id="UP000001306">
    <property type="component" value="Chromosome"/>
</dbReference>
<dbReference type="GO" id="GO:0005737">
    <property type="term" value="C:cytoplasm"/>
    <property type="evidence" value="ECO:0007669"/>
    <property type="project" value="UniProtKB-SubCell"/>
</dbReference>
<dbReference type="GO" id="GO:0005524">
    <property type="term" value="F:ATP binding"/>
    <property type="evidence" value="ECO:0007669"/>
    <property type="project" value="UniProtKB-KW"/>
</dbReference>
<dbReference type="GO" id="GO:0004821">
    <property type="term" value="F:histidine-tRNA ligase activity"/>
    <property type="evidence" value="ECO:0007669"/>
    <property type="project" value="UniProtKB-EC"/>
</dbReference>
<dbReference type="GO" id="GO:0006427">
    <property type="term" value="P:histidyl-tRNA aminoacylation"/>
    <property type="evidence" value="ECO:0007669"/>
    <property type="project" value="InterPro"/>
</dbReference>
<dbReference type="CDD" id="cd00773">
    <property type="entry name" value="HisRS-like_core"/>
    <property type="match status" value="1"/>
</dbReference>
<dbReference type="Gene3D" id="3.30.930.10">
    <property type="entry name" value="Bira Bifunctional Protein, Domain 2"/>
    <property type="match status" value="1"/>
</dbReference>
<dbReference type="InterPro" id="IPR006195">
    <property type="entry name" value="aa-tRNA-synth_II"/>
</dbReference>
<dbReference type="InterPro" id="IPR045864">
    <property type="entry name" value="aa-tRNA-synth_II/BPL/LPL"/>
</dbReference>
<dbReference type="InterPro" id="IPR015807">
    <property type="entry name" value="His-tRNA-ligase"/>
</dbReference>
<dbReference type="InterPro" id="IPR041715">
    <property type="entry name" value="HisRS-like_core"/>
</dbReference>
<dbReference type="InterPro" id="IPR004516">
    <property type="entry name" value="HisRS/HisZ"/>
</dbReference>
<dbReference type="NCBIfam" id="TIGR00442">
    <property type="entry name" value="hisS"/>
    <property type="match status" value="1"/>
</dbReference>
<dbReference type="PANTHER" id="PTHR11476:SF7">
    <property type="entry name" value="HISTIDINE--TRNA LIGASE"/>
    <property type="match status" value="1"/>
</dbReference>
<dbReference type="PANTHER" id="PTHR11476">
    <property type="entry name" value="HISTIDYL-TRNA SYNTHETASE"/>
    <property type="match status" value="1"/>
</dbReference>
<dbReference type="Pfam" id="PF13393">
    <property type="entry name" value="tRNA-synt_His"/>
    <property type="match status" value="1"/>
</dbReference>
<dbReference type="PIRSF" id="PIRSF001549">
    <property type="entry name" value="His-tRNA_synth"/>
    <property type="match status" value="1"/>
</dbReference>
<dbReference type="SUPFAM" id="SSF55681">
    <property type="entry name" value="Class II aaRS and biotin synthetases"/>
    <property type="match status" value="1"/>
</dbReference>
<dbReference type="PROSITE" id="PS50862">
    <property type="entry name" value="AA_TRNA_LIGASE_II"/>
    <property type="match status" value="1"/>
</dbReference>
<sequence>MASPITPPRGMRDFLPAEKARREHALGVIRRSFSAHGFDEIETPVAEDVARLHAGLGGDNEKLAFSVLKRGLSGDDLRAAIESGDTLSLCDLGLRFDLTVPLARFFASHRAELSPVFRSLQIAPVWRAERPQKGRYRQFVQCDIDIVGEASQLAEAELITATAATLDALGLKDCTIRVNDRRILNALLQHCGFAEARWPRALISIDKLDKIGAEGVVAELSEGAADAAAALGGVLAGFEPHLADGGVELTAQAILRILPAGVDTAAIGELETLAHALGALPTGVRLRFDPKLVRGMGYYTGVIFEIAHPGSGSSVGGGGRYDGMIGRFLGTEVPACGFSIGFERVVDLIELPESAGPDSVVLVYDPAMPIGRLLAIKSDLAAAGRRVRLDRRAKNLKAVLDRAAAAGFRSFAFVDADTPAVALDLKPLTEL</sequence>
<keyword id="KW-0030">Aminoacyl-tRNA synthetase</keyword>
<keyword id="KW-0067">ATP-binding</keyword>
<keyword id="KW-0963">Cytoplasm</keyword>
<keyword id="KW-0436">Ligase</keyword>
<keyword id="KW-0547">Nucleotide-binding</keyword>
<keyword id="KW-0648">Protein biosynthesis</keyword>
<keyword id="KW-1185">Reference proteome</keyword>